<reference key="1">
    <citation type="journal article" date="1992" name="J. Biol. Chem.">
        <title>The Candida albicans myristoyl-CoA:protein N-myristoyltransferase gene. Isolation and expression in Saccharomyces cerevisiae and Escherichia coli.</title>
        <authorList>
            <person name="Wiegand R.C."/>
            <person name="Carr C."/>
            <person name="Minnerly J.C."/>
            <person name="Pauley A.M."/>
            <person name="Carron C.P."/>
            <person name="Langner C.A."/>
            <person name="Duronio R.J."/>
            <person name="Gordon J.I."/>
        </authorList>
    </citation>
    <scope>NUCLEOTIDE SEQUENCE [GENOMIC DNA]</scope>
    <scope>PROTEIN SEQUENCE OF 121-132; 291-300; 341-359 AND 408-423</scope>
    <scope>FUNCTION</scope>
    <scope>CATALYTIC ACTIVITY</scope>
    <source>
        <strain>ATCC 32354 / B311</strain>
    </source>
</reference>
<reference key="2">
    <citation type="journal article" date="2004" name="Proc. Natl. Acad. Sci. U.S.A.">
        <title>The diploid genome sequence of Candida albicans.</title>
        <authorList>
            <person name="Jones T."/>
            <person name="Federspiel N.A."/>
            <person name="Chibana H."/>
            <person name="Dungan J."/>
            <person name="Kalman S."/>
            <person name="Magee B.B."/>
            <person name="Newport G."/>
            <person name="Thorstenson Y.R."/>
            <person name="Agabian N."/>
            <person name="Magee P.T."/>
            <person name="Davis R.W."/>
            <person name="Scherer S."/>
        </authorList>
    </citation>
    <scope>NUCLEOTIDE SEQUENCE [LARGE SCALE GENOMIC DNA]</scope>
    <source>
        <strain>SC5314 / ATCC MYA-2876</strain>
    </source>
</reference>
<reference key="3">
    <citation type="journal article" date="2007" name="Genome Biol.">
        <title>Assembly of the Candida albicans genome into sixteen supercontigs aligned on the eight chromosomes.</title>
        <authorList>
            <person name="van het Hoog M."/>
            <person name="Rast T.J."/>
            <person name="Martchenko M."/>
            <person name="Grindle S."/>
            <person name="Dignard D."/>
            <person name="Hogues H."/>
            <person name="Cuomo C."/>
            <person name="Berriman M."/>
            <person name="Scherer S."/>
            <person name="Magee B.B."/>
            <person name="Whiteway M."/>
            <person name="Chibana H."/>
            <person name="Nantel A."/>
            <person name="Magee P.T."/>
        </authorList>
    </citation>
    <scope>GENOME REANNOTATION</scope>
    <source>
        <strain>SC5314 / ATCC MYA-2876</strain>
    </source>
</reference>
<reference key="4">
    <citation type="journal article" date="2013" name="Genome Biol.">
        <title>Assembly of a phased diploid Candida albicans genome facilitates allele-specific measurements and provides a simple model for repeat and indel structure.</title>
        <authorList>
            <person name="Muzzey D."/>
            <person name="Schwartz K."/>
            <person name="Weissman J.S."/>
            <person name="Sherlock G."/>
        </authorList>
    </citation>
    <scope>NUCLEOTIDE SEQUENCE [LARGE SCALE GENOMIC DNA]</scope>
    <scope>GENOME REANNOTATION</scope>
    <source>
        <strain>SC5314 / ATCC MYA-2876</strain>
    </source>
</reference>
<reference key="5">
    <citation type="journal article" date="1994" name="J. Biol. Chem.">
        <title>Comparison of myristoyl-CoA:protein N-myristoyltransferases from three pathogenic fungi: Cryptococcus neoformans, Histoplasma capsulatum, and Candida albicans.</title>
        <authorList>
            <person name="Lodge J.K."/>
            <person name="Johnson R.L."/>
            <person name="Weinberg R.A."/>
            <person name="Gordon J.I."/>
        </authorList>
    </citation>
    <scope>FUNCTION</scope>
    <scope>MUTAGENESIS OF GLY-447</scope>
    <scope>CATALYTIC ACTIVITY</scope>
</reference>
<reference key="6">
    <citation type="journal article" date="1997" name="J. Biol. Chem.">
        <title>Scanning alanine mutagenesis and de-peptidization of a Candida albicans myristoyl-CoA:protein N-myristoyltransferase octapeptide substrate reveals three elements critical for molecular recognition.</title>
        <authorList>
            <person name="McWherter C.A."/>
            <person name="Rocque W.J."/>
            <person name="Zupec M.E."/>
            <person name="Freeman S.K."/>
            <person name="Brown D.L."/>
            <person name="Devadas B."/>
            <person name="Getman D.P."/>
            <person name="Sikorski J.A."/>
            <person name="Gordon J.I."/>
        </authorList>
    </citation>
    <scope>FUNCTION</scope>
    <scope>SUBSTRATE SPECIFICITY</scope>
    <scope>CATALYTIC ACTIVITY</scope>
</reference>
<reference key="7">
    <citation type="journal article" date="1998" name="Nat. Struct. Biol.">
        <title>Crystal structure of the anti-fungal target N-myristoyl transferase.</title>
        <authorList>
            <person name="Weston S.A."/>
            <person name="Camble R."/>
            <person name="Colls J."/>
            <person name="Rosenbrock G."/>
            <person name="Taylor I."/>
            <person name="Egerton M."/>
            <person name="Tucker A.D."/>
            <person name="Tunnicliffe A."/>
            <person name="Mistry A."/>
            <person name="Mancia F."/>
            <person name="de la Fortelle E."/>
            <person name="Irwin J."/>
            <person name="Bricogne G."/>
            <person name="Pauptit R.A."/>
        </authorList>
    </citation>
    <scope>X-RAY CRYSTALLOGRAPHY (2.45 ANGSTROMS)</scope>
</reference>
<reference evidence="7 8" key="8">
    <citation type="journal article" date="2002" name="Chem. Biol.">
        <title>Crystal structures of Candida albicans N-myristoyltransferase with two distinct inhibitors.</title>
        <authorList>
            <person name="Sogabe S."/>
            <person name="Masubuchi M."/>
            <person name="Sakata K."/>
            <person name="Fukami T.A."/>
            <person name="Morikami K."/>
            <person name="Shiratori Y."/>
            <person name="Ebiike H."/>
            <person name="Kawasaki K."/>
            <person name="Aoki Y."/>
            <person name="Shimma N."/>
            <person name="D'Arcy A."/>
            <person name="Winkler F.K."/>
            <person name="Banner D.W."/>
            <person name="Ohtsuka T."/>
        </authorList>
    </citation>
    <scope>X-RAY CRYSTALLOGRAPHY (2.3 ANGSTROMS) OF 60-451 IN COMPLEXES WITH MYRISTOYL-COA AND INHIBITORS</scope>
</reference>
<comment type="function">
    <text evidence="3 4 5">Adds a myristoyl group to the N-terminal glycine residue of certain cellular proteins. Substrate specificity requires an N-terminal glycine in the nascent polypeptide substrates. Ser is present at position 5 in almost all known N-myristoyl proteins and Lys is commonly encountered at postion 6. Basic residues are preferred at positions 7 and 8.</text>
</comment>
<comment type="catalytic activity">
    <reaction evidence="3 4 5">
        <text>N-terminal glycyl-[protein] + tetradecanoyl-CoA = N-tetradecanoylglycyl-[protein] + CoA + H(+)</text>
        <dbReference type="Rhea" id="RHEA:15521"/>
        <dbReference type="Rhea" id="RHEA-COMP:12666"/>
        <dbReference type="Rhea" id="RHEA-COMP:12667"/>
        <dbReference type="ChEBI" id="CHEBI:15378"/>
        <dbReference type="ChEBI" id="CHEBI:57287"/>
        <dbReference type="ChEBI" id="CHEBI:57385"/>
        <dbReference type="ChEBI" id="CHEBI:64723"/>
        <dbReference type="ChEBI" id="CHEBI:133050"/>
        <dbReference type="EC" id="2.3.1.97"/>
    </reaction>
</comment>
<comment type="activity regulation">
    <text>Competitively inhibited by SC-58272, a peptidomimetic derived from the N-terminal sequence of a natural substrate.</text>
</comment>
<comment type="subunit">
    <text evidence="2">Monomer.</text>
</comment>
<comment type="subcellular location">
    <subcellularLocation>
        <location>Cytoplasm</location>
    </subcellularLocation>
</comment>
<comment type="miscellaneous">
    <text>Has an ordered Bi-Bi kinetic mechanism, with myristoyl-CoA binding taking place prior to peptide binding and CoA release occurring before acylated peptide release. Cooperative interactions between the acyl-CoA and peptide binding sites of NMT contribute to its extraordinary chain-length specificity.</text>
</comment>
<comment type="similarity">
    <text evidence="6">Belongs to the NMT family.</text>
</comment>
<protein>
    <recommendedName>
        <fullName>Glycylpeptide N-tetradecanoyltransferase</fullName>
        <ecNumber evidence="3 4 5">2.3.1.97</ecNumber>
    </recommendedName>
    <alternativeName>
        <fullName>Myristoyl-CoA:protein N-myristoyltransferase</fullName>
        <shortName>NMT</shortName>
    </alternativeName>
    <alternativeName>
        <fullName>Peptide N-myristoyltransferase</fullName>
    </alternativeName>
</protein>
<name>NMT_CANAL</name>
<accession>P30418</accession>
<accession>A0A1D8PLA8</accession>
<accession>Q5AMK5</accession>
<keyword id="KW-0002">3D-structure</keyword>
<keyword id="KW-0012">Acyltransferase</keyword>
<keyword id="KW-0963">Cytoplasm</keyword>
<keyword id="KW-0903">Direct protein sequencing</keyword>
<keyword id="KW-1185">Reference proteome</keyword>
<keyword id="KW-0808">Transferase</keyword>
<sequence>MSGDNTGNKSNSAPSKSIEELLKLLAMGQELSPAQQKEMKDYKFWKTQPVPSLSETVTEEGPIDKLKTPEDVPNDPLPLISDFEWSTLDIDDNLQLDELYKLLYDNYVEDIDATFRFKYSHEFFQWALKPPGWRKDWHVGVRVKSTGKLVAFIAATPVTFKLNKSNKVIDSVEINFLCIHKKLRNKRLAPVLIKEITRRVNKQNIWQALYTGGSILPTPLTTCRYQHRPINWSKLHDVGFSHLPPNQTKSSMVASYTLPNNPKLKGLRPMTGKDVSTVLSLLYKYQERFDIVQLFTEEEFKHWMLGHDENSDSNVVKSYVVEDENGVITDYFSYYLLPFTVLDNAQHDELGIAYLFYYASDSFEKPNYKKRLNELITDALITSKKFGVDVFNCLTCQDNTYFLKDCKFGSGDGFLNYYLFNYRTFPMDGGIDKKTKEVVEDQTSGIGVVLL</sequence>
<organism>
    <name type="scientific">Candida albicans (strain SC5314 / ATCC MYA-2876)</name>
    <name type="common">Yeast</name>
    <dbReference type="NCBI Taxonomy" id="237561"/>
    <lineage>
        <taxon>Eukaryota</taxon>
        <taxon>Fungi</taxon>
        <taxon>Dikarya</taxon>
        <taxon>Ascomycota</taxon>
        <taxon>Saccharomycotina</taxon>
        <taxon>Pichiomycetes</taxon>
        <taxon>Debaryomycetaceae</taxon>
        <taxon>Candida/Lodderomyces clade</taxon>
        <taxon>Candida</taxon>
    </lineage>
</organism>
<proteinExistence type="evidence at protein level"/>
<feature type="chain" id="PRO_0000064236" description="Glycylpeptide N-tetradecanoyltransferase">
    <location>
        <begin position="1"/>
        <end position="451"/>
    </location>
</feature>
<feature type="active site" description="Proton acceptor; via carboxylate" evidence="1">
    <location>
        <position position="451"/>
    </location>
</feature>
<feature type="binding site" evidence="2 7">
    <location>
        <begin position="177"/>
        <end position="179"/>
    </location>
    <ligand>
        <name>tetradecanoyl-CoA</name>
        <dbReference type="ChEBI" id="CHEBI:57385"/>
    </ligand>
</feature>
<feature type="binding site" evidence="2 7">
    <location>
        <begin position="185"/>
        <end position="189"/>
    </location>
    <ligand>
        <name>tetradecanoyl-CoA</name>
        <dbReference type="ChEBI" id="CHEBI:57385"/>
    </ligand>
</feature>
<feature type="mutagenesis site" description="Causes temperature-dependent reduction in catalytic activity." evidence="4">
    <original>G</original>
    <variation>D</variation>
    <location>
        <position position="447"/>
    </location>
</feature>
<feature type="helix" evidence="9">
    <location>
        <begin position="69"/>
        <end position="71"/>
    </location>
</feature>
<feature type="strand" evidence="9">
    <location>
        <begin position="82"/>
        <end position="87"/>
    </location>
</feature>
<feature type="helix" evidence="9">
    <location>
        <begin position="93"/>
        <end position="106"/>
    </location>
</feature>
<feature type="strand" evidence="9">
    <location>
        <begin position="113"/>
        <end position="117"/>
    </location>
</feature>
<feature type="helix" evidence="9">
    <location>
        <begin position="121"/>
        <end position="128"/>
    </location>
</feature>
<feature type="helix" evidence="9">
    <location>
        <begin position="135"/>
        <end position="137"/>
    </location>
</feature>
<feature type="strand" evidence="9">
    <location>
        <begin position="138"/>
        <end position="143"/>
    </location>
</feature>
<feature type="turn" evidence="9">
    <location>
        <begin position="144"/>
        <end position="146"/>
    </location>
</feature>
<feature type="strand" evidence="9">
    <location>
        <begin position="149"/>
        <end position="162"/>
    </location>
</feature>
<feature type="turn" evidence="9">
    <location>
        <begin position="163"/>
        <end position="166"/>
    </location>
</feature>
<feature type="strand" evidence="9">
    <location>
        <begin position="167"/>
        <end position="179"/>
    </location>
</feature>
<feature type="helix" evidence="9">
    <location>
        <begin position="181"/>
        <end position="183"/>
    </location>
</feature>
<feature type="strand" evidence="10">
    <location>
        <begin position="185"/>
        <end position="187"/>
    </location>
</feature>
<feature type="helix" evidence="9">
    <location>
        <begin position="189"/>
        <end position="201"/>
    </location>
</feature>
<feature type="turn" evidence="9">
    <location>
        <begin position="202"/>
        <end position="204"/>
    </location>
</feature>
<feature type="strand" evidence="9">
    <location>
        <begin position="208"/>
        <end position="212"/>
    </location>
</feature>
<feature type="strand" evidence="9">
    <location>
        <begin position="220"/>
        <end position="231"/>
    </location>
</feature>
<feature type="helix" evidence="9">
    <location>
        <begin position="232"/>
        <end position="237"/>
    </location>
</feature>
<feature type="helix" evidence="9">
    <location>
        <begin position="249"/>
        <end position="256"/>
    </location>
</feature>
<feature type="strand" evidence="9">
    <location>
        <begin position="267"/>
        <end position="269"/>
    </location>
</feature>
<feature type="helix" evidence="9">
    <location>
        <begin position="272"/>
        <end position="274"/>
    </location>
</feature>
<feature type="helix" evidence="9">
    <location>
        <begin position="275"/>
        <end position="286"/>
    </location>
</feature>
<feature type="strand" evidence="9">
    <location>
        <begin position="289"/>
        <end position="294"/>
    </location>
</feature>
<feature type="helix" evidence="9">
    <location>
        <begin position="297"/>
        <end position="305"/>
    </location>
</feature>
<feature type="strand" evidence="9">
    <location>
        <begin position="309"/>
        <end position="311"/>
    </location>
</feature>
<feature type="strand" evidence="9">
    <location>
        <begin position="314"/>
        <end position="322"/>
    </location>
</feature>
<feature type="strand" evidence="9">
    <location>
        <begin position="328"/>
        <end position="336"/>
    </location>
</feature>
<feature type="strand" evidence="9">
    <location>
        <begin position="339"/>
        <end position="343"/>
    </location>
</feature>
<feature type="strand" evidence="9">
    <location>
        <begin position="348"/>
        <end position="350"/>
    </location>
</feature>
<feature type="strand" evidence="9">
    <location>
        <begin position="352"/>
        <end position="360"/>
    </location>
</feature>
<feature type="turn" evidence="9">
    <location>
        <begin position="361"/>
        <end position="364"/>
    </location>
</feature>
<feature type="helix" evidence="9">
    <location>
        <begin position="368"/>
        <end position="383"/>
    </location>
</feature>
<feature type="helix" evidence="9">
    <location>
        <begin position="384"/>
        <end position="386"/>
    </location>
</feature>
<feature type="strand" evidence="9">
    <location>
        <begin position="389"/>
        <end position="395"/>
    </location>
</feature>
<feature type="helix" evidence="9">
    <location>
        <begin position="399"/>
        <end position="401"/>
    </location>
</feature>
<feature type="turn" evidence="9">
    <location>
        <begin position="402"/>
        <end position="407"/>
    </location>
</feature>
<feature type="strand" evidence="9">
    <location>
        <begin position="409"/>
        <end position="420"/>
    </location>
</feature>
<feature type="turn" evidence="9">
    <location>
        <begin position="433"/>
        <end position="435"/>
    </location>
</feature>
<feature type="strand" evidence="9">
    <location>
        <begin position="445"/>
        <end position="447"/>
    </location>
</feature>
<gene>
    <name type="primary">NMT1</name>
    <name type="ordered locus">CAALFM_C401440WA</name>
    <name type="ORF">CaO19.12111</name>
    <name type="ORF">CaO19.4641</name>
</gene>
<evidence type="ECO:0000250" key="1"/>
<evidence type="ECO:0000269" key="2">
    <source>
    </source>
</evidence>
<evidence type="ECO:0000269" key="3">
    <source>
    </source>
</evidence>
<evidence type="ECO:0000269" key="4">
    <source>
    </source>
</evidence>
<evidence type="ECO:0000269" key="5">
    <source>
    </source>
</evidence>
<evidence type="ECO:0000305" key="6"/>
<evidence type="ECO:0007744" key="7">
    <source>
        <dbReference type="PDB" id="1IYK"/>
    </source>
</evidence>
<evidence type="ECO:0007744" key="8">
    <source>
        <dbReference type="PDB" id="1IYL"/>
    </source>
</evidence>
<evidence type="ECO:0007829" key="9">
    <source>
        <dbReference type="PDB" id="1IYK"/>
    </source>
</evidence>
<evidence type="ECO:0007829" key="10">
    <source>
        <dbReference type="PDB" id="1IYL"/>
    </source>
</evidence>
<dbReference type="EC" id="2.3.1.97" evidence="3 4 5"/>
<dbReference type="EMBL" id="M80544">
    <property type="protein sequence ID" value="AAA34351.1"/>
    <property type="molecule type" value="Genomic_DNA"/>
</dbReference>
<dbReference type="EMBL" id="CP017626">
    <property type="protein sequence ID" value="AOW28926.1"/>
    <property type="molecule type" value="Genomic_DNA"/>
</dbReference>
<dbReference type="PIR" id="A38099">
    <property type="entry name" value="A38099"/>
</dbReference>
<dbReference type="RefSeq" id="XP_722713.1">
    <property type="nucleotide sequence ID" value="XM_717620.2"/>
</dbReference>
<dbReference type="PDB" id="1IYK">
    <property type="method" value="X-ray"/>
    <property type="resolution" value="2.30 A"/>
    <property type="chains" value="A/B=60-451"/>
</dbReference>
<dbReference type="PDB" id="1IYL">
    <property type="method" value="X-ray"/>
    <property type="resolution" value="3.20 A"/>
    <property type="chains" value="A/B/C/D=60-451"/>
</dbReference>
<dbReference type="PDB" id="1NMT">
    <property type="method" value="X-ray"/>
    <property type="resolution" value="2.45 A"/>
    <property type="chains" value="A/B/C=60-451"/>
</dbReference>
<dbReference type="PDBsum" id="1IYK"/>
<dbReference type="PDBsum" id="1IYL"/>
<dbReference type="PDBsum" id="1NMT"/>
<dbReference type="SMR" id="P30418"/>
<dbReference type="BioGRID" id="1218551">
    <property type="interactions" value="1"/>
</dbReference>
<dbReference type="FunCoup" id="P30418">
    <property type="interactions" value="985"/>
</dbReference>
<dbReference type="STRING" id="237561.P30418"/>
<dbReference type="BindingDB" id="P30418"/>
<dbReference type="ChEMBL" id="CHEMBL3548"/>
<dbReference type="DrugBank" id="DB03062">
    <property type="generic name" value="(1-Methyl-1h-Imidazol-2-Yl)-(3-Methyl-4-{3-[(Pyridin-3-Ylmethyl)-Amino]-Propoxy}-Benzofuran-2-Yl)-Methanone"/>
</dbReference>
<dbReference type="DrugBank" id="DB02180">
    <property type="generic name" value="Myristoyl-Coa"/>
</dbReference>
<dbReference type="DrugBank" id="DB02477">
    <property type="generic name" value="N-({4-[4-(2-Methyl-1H-imidazol-1-yl)butyl]phenyl}acetyl)-L-seryl-N-(2-cyclohexylethyl)-L-lysinamide"/>
</dbReference>
<dbReference type="EnsemblFungi" id="C4_01440W_A-T">
    <property type="protein sequence ID" value="C4_01440W_A-T-p1"/>
    <property type="gene ID" value="C4_01440W_A"/>
</dbReference>
<dbReference type="GeneID" id="3635624"/>
<dbReference type="KEGG" id="cal:CAALFM_C401440WA"/>
<dbReference type="CGD" id="CAL0000201559">
    <property type="gene designation" value="NMT1"/>
</dbReference>
<dbReference type="VEuPathDB" id="FungiDB:C4_01440W_A"/>
<dbReference type="eggNOG" id="KOG2779">
    <property type="taxonomic scope" value="Eukaryota"/>
</dbReference>
<dbReference type="HOGENOM" id="CLU_022882_1_0_1"/>
<dbReference type="InParanoid" id="P30418"/>
<dbReference type="OMA" id="GWKRDWH"/>
<dbReference type="OrthoDB" id="60315at2759"/>
<dbReference type="BRENDA" id="2.3.1.97">
    <property type="organism ID" value="1096"/>
</dbReference>
<dbReference type="EvolutionaryTrace" id="P30418"/>
<dbReference type="PRO" id="PR:P30418"/>
<dbReference type="Proteomes" id="UP000000559">
    <property type="component" value="Chromosome 4"/>
</dbReference>
<dbReference type="GO" id="GO:0005829">
    <property type="term" value="C:cytosol"/>
    <property type="evidence" value="ECO:0000318"/>
    <property type="project" value="GO_Central"/>
</dbReference>
<dbReference type="GO" id="GO:0004379">
    <property type="term" value="F:glycylpeptide N-tetradecanoyltransferase activity"/>
    <property type="evidence" value="ECO:0000314"/>
    <property type="project" value="CGD"/>
</dbReference>
<dbReference type="GO" id="GO:0072657">
    <property type="term" value="P:protein localization to membrane"/>
    <property type="evidence" value="ECO:0000318"/>
    <property type="project" value="GO_Central"/>
</dbReference>
<dbReference type="FunFam" id="3.40.630.30:FF:000042">
    <property type="entry name" value="Glycylpeptide N-tetradecanoyltransferase"/>
    <property type="match status" value="1"/>
</dbReference>
<dbReference type="FunFam" id="3.40.630.30:FF:000056">
    <property type="entry name" value="Glycylpeptide N-tetradecanoyltransferase"/>
    <property type="match status" value="1"/>
</dbReference>
<dbReference type="Gene3D" id="3.40.630.30">
    <property type="match status" value="2"/>
</dbReference>
<dbReference type="InterPro" id="IPR016181">
    <property type="entry name" value="Acyl_CoA_acyltransferase"/>
</dbReference>
<dbReference type="InterPro" id="IPR000903">
    <property type="entry name" value="NMT"/>
</dbReference>
<dbReference type="InterPro" id="IPR022677">
    <property type="entry name" value="NMT_C"/>
</dbReference>
<dbReference type="InterPro" id="IPR022678">
    <property type="entry name" value="NMT_CS"/>
</dbReference>
<dbReference type="InterPro" id="IPR022676">
    <property type="entry name" value="NMT_N"/>
</dbReference>
<dbReference type="PANTHER" id="PTHR11377:SF5">
    <property type="entry name" value="GLYCYLPEPTIDE N-TETRADECANOYLTRANSFERASE"/>
    <property type="match status" value="1"/>
</dbReference>
<dbReference type="PANTHER" id="PTHR11377">
    <property type="entry name" value="N-MYRISTOYL TRANSFERASE"/>
    <property type="match status" value="1"/>
</dbReference>
<dbReference type="Pfam" id="PF01233">
    <property type="entry name" value="NMT"/>
    <property type="match status" value="1"/>
</dbReference>
<dbReference type="Pfam" id="PF02799">
    <property type="entry name" value="NMT_C"/>
    <property type="match status" value="1"/>
</dbReference>
<dbReference type="PIRSF" id="PIRSF015892">
    <property type="entry name" value="N-myristl_transf"/>
    <property type="match status" value="1"/>
</dbReference>
<dbReference type="SUPFAM" id="SSF55729">
    <property type="entry name" value="Acyl-CoA N-acyltransferases (Nat)"/>
    <property type="match status" value="2"/>
</dbReference>
<dbReference type="PROSITE" id="PS00975">
    <property type="entry name" value="NMT_1"/>
    <property type="match status" value="1"/>
</dbReference>
<dbReference type="PROSITE" id="PS00976">
    <property type="entry name" value="NMT_2"/>
    <property type="match status" value="1"/>
</dbReference>